<feature type="chain" id="PRO_0000361287" description="Blue-light-activated histidine kinase">
    <location>
        <begin position="1"/>
        <end position="489"/>
    </location>
</feature>
<feature type="domain" description="PAS" evidence="2">
    <location>
        <begin position="19"/>
        <end position="93"/>
    </location>
</feature>
<feature type="domain" description="PAC 1" evidence="3">
    <location>
        <begin position="93"/>
        <end position="147"/>
    </location>
</feature>
<feature type="domain" description="PAC 2" evidence="3">
    <location>
        <begin position="232"/>
        <end position="281"/>
    </location>
</feature>
<feature type="region of interest" description="HWE histidine kinase domain">
    <location>
        <begin position="285"/>
        <end position="367"/>
    </location>
</feature>
<feature type="modified residue" description="S-4a-FMN cysteine" evidence="1">
    <location>
        <position position="69"/>
    </location>
</feature>
<feature type="modified residue" description="Phosphohistidine; by autocatalysis" evidence="1">
    <location>
        <position position="288"/>
    </location>
</feature>
<evidence type="ECO:0000250" key="1"/>
<evidence type="ECO:0000255" key="2">
    <source>
        <dbReference type="PROSITE-ProRule" id="PRU00140"/>
    </source>
</evidence>
<evidence type="ECO:0000255" key="3">
    <source>
        <dbReference type="PROSITE-ProRule" id="PRU00141"/>
    </source>
</evidence>
<evidence type="ECO:0000305" key="4"/>
<proteinExistence type="inferred from homology"/>
<organism>
    <name type="scientific">Brucella suis (strain ATCC 23445 / NCTC 10510)</name>
    <dbReference type="NCBI Taxonomy" id="470137"/>
    <lineage>
        <taxon>Bacteria</taxon>
        <taxon>Pseudomonadati</taxon>
        <taxon>Pseudomonadota</taxon>
        <taxon>Alphaproteobacteria</taxon>
        <taxon>Hyphomicrobiales</taxon>
        <taxon>Brucellaceae</taxon>
        <taxon>Brucella/Ochrobactrum group</taxon>
        <taxon>Brucella</taxon>
    </lineage>
</organism>
<sequence length="489" mass="54874">MAIDLRPFIPFGRGALSQATDPFRAAVEFTLMPMLITNPHLPDNPIVFANPAFLKLTGYEADEVMGRNCRFLQGHGTDPAHVRAIKSAIAAEKPIDIDIINYKKSGEAFWNRLHISPVHNANGRLQHFVSSQLDVTLELSRLVELEKERKTLSIETARSKDQLDYIVEVANIGFWTREFYSGKMTCSAECRRIYGFTPDEPVHFDTILDLVVLEDRMTVVQKAHQAVTGEPYSIEYRIVTRLGETRWLETRAKALTGENPLVLGIVQDVTERKKAEANKALVSREIAHRFKNSMAMVQSIANQTLRNTYDPEQANRLFSERLRALSQAHDMLLKENWAGATIQQICATALAPFNSTFANRIHMSGPHLLVSDRVTVALSLAFYELATNAVKYGALSNEKGVINITWAIMEDKGEKKFHMRWAESRGPEVMQPARRGFGQRLLHSVLAEELKAKCDVEFAASGLLIDVLAPITPEVFPGMGHNVPEQRIA</sequence>
<name>LOVHK_BRUSI</name>
<protein>
    <recommendedName>
        <fullName>Blue-light-activated histidine kinase</fullName>
        <ecNumber>2.7.13.3</ecNumber>
    </recommendedName>
</protein>
<accession>A9WYQ7</accession>
<dbReference type="EC" id="2.7.13.3"/>
<dbReference type="EMBL" id="CP000912">
    <property type="protein sequence ID" value="ABY39573.1"/>
    <property type="status" value="ALT_INIT"/>
    <property type="molecule type" value="Genomic_DNA"/>
</dbReference>
<dbReference type="RefSeq" id="WP_002971240.1">
    <property type="nucleotide sequence ID" value="NC_010167.1"/>
</dbReference>
<dbReference type="SMR" id="A9WYQ7"/>
<dbReference type="KEGG" id="bmt:BSUIS_B0585"/>
<dbReference type="HOGENOM" id="CLU_000445_114_57_5"/>
<dbReference type="Proteomes" id="UP000008545">
    <property type="component" value="Chromosome II"/>
</dbReference>
<dbReference type="GO" id="GO:0005524">
    <property type="term" value="F:ATP binding"/>
    <property type="evidence" value="ECO:0007669"/>
    <property type="project" value="UniProtKB-KW"/>
</dbReference>
<dbReference type="GO" id="GO:0009881">
    <property type="term" value="F:photoreceptor activity"/>
    <property type="evidence" value="ECO:0007669"/>
    <property type="project" value="UniProtKB-KW"/>
</dbReference>
<dbReference type="GO" id="GO:0004673">
    <property type="term" value="F:protein histidine kinase activity"/>
    <property type="evidence" value="ECO:0007669"/>
    <property type="project" value="UniProtKB-EC"/>
</dbReference>
<dbReference type="CDD" id="cd00130">
    <property type="entry name" value="PAS"/>
    <property type="match status" value="2"/>
</dbReference>
<dbReference type="Gene3D" id="2.10.70.100">
    <property type="match status" value="1"/>
</dbReference>
<dbReference type="Gene3D" id="3.30.450.20">
    <property type="entry name" value="PAS domain"/>
    <property type="match status" value="2"/>
</dbReference>
<dbReference type="InterPro" id="IPR001610">
    <property type="entry name" value="PAC"/>
</dbReference>
<dbReference type="InterPro" id="IPR000014">
    <property type="entry name" value="PAS"/>
</dbReference>
<dbReference type="InterPro" id="IPR000700">
    <property type="entry name" value="PAS-assoc_C"/>
</dbReference>
<dbReference type="InterPro" id="IPR035965">
    <property type="entry name" value="PAS-like_dom_sf"/>
</dbReference>
<dbReference type="InterPro" id="IPR013655">
    <property type="entry name" value="PAS_fold_3"/>
</dbReference>
<dbReference type="InterPro" id="IPR011102">
    <property type="entry name" value="Sig_transdc_His_kinase_HWE"/>
</dbReference>
<dbReference type="NCBIfam" id="TIGR00229">
    <property type="entry name" value="sensory_box"/>
    <property type="match status" value="2"/>
</dbReference>
<dbReference type="PANTHER" id="PTHR41523:SF7">
    <property type="entry name" value="HISTIDINE KINASE"/>
    <property type="match status" value="1"/>
</dbReference>
<dbReference type="PANTHER" id="PTHR41523">
    <property type="entry name" value="TWO-COMPONENT SYSTEM SENSOR PROTEIN"/>
    <property type="match status" value="1"/>
</dbReference>
<dbReference type="Pfam" id="PF07536">
    <property type="entry name" value="HWE_HK"/>
    <property type="match status" value="1"/>
</dbReference>
<dbReference type="Pfam" id="PF08447">
    <property type="entry name" value="PAS_3"/>
    <property type="match status" value="1"/>
</dbReference>
<dbReference type="Pfam" id="PF13426">
    <property type="entry name" value="PAS_9"/>
    <property type="match status" value="1"/>
</dbReference>
<dbReference type="SMART" id="SM00911">
    <property type="entry name" value="HWE_HK"/>
    <property type="match status" value="1"/>
</dbReference>
<dbReference type="SMART" id="SM00086">
    <property type="entry name" value="PAC"/>
    <property type="match status" value="2"/>
</dbReference>
<dbReference type="SMART" id="SM00091">
    <property type="entry name" value="PAS"/>
    <property type="match status" value="2"/>
</dbReference>
<dbReference type="SUPFAM" id="SSF55785">
    <property type="entry name" value="PYP-like sensor domain (PAS domain)"/>
    <property type="match status" value="2"/>
</dbReference>
<dbReference type="PROSITE" id="PS50113">
    <property type="entry name" value="PAC"/>
    <property type="match status" value="2"/>
</dbReference>
<dbReference type="PROSITE" id="PS50112">
    <property type="entry name" value="PAS"/>
    <property type="match status" value="1"/>
</dbReference>
<gene>
    <name type="ordered locus">BSUIS_B0585</name>
</gene>
<keyword id="KW-0067">ATP-binding</keyword>
<keyword id="KW-0157">Chromophore</keyword>
<keyword id="KW-0285">Flavoprotein</keyword>
<keyword id="KW-0288">FMN</keyword>
<keyword id="KW-0418">Kinase</keyword>
<keyword id="KW-0547">Nucleotide-binding</keyword>
<keyword id="KW-0597">Phosphoprotein</keyword>
<keyword id="KW-0600">Photoreceptor protein</keyword>
<keyword id="KW-0675">Receptor</keyword>
<keyword id="KW-0677">Repeat</keyword>
<keyword id="KW-0716">Sensory transduction</keyword>
<keyword id="KW-0808">Transferase</keyword>
<keyword id="KW-0843">Virulence</keyword>
<reference key="1">
    <citation type="submission" date="2007-12" db="EMBL/GenBank/DDBJ databases">
        <title>Brucella suis ATCC 23445 whole genome shotgun sequencing project.</title>
        <authorList>
            <person name="Setubal J.C."/>
            <person name="Bowns C."/>
            <person name="Boyle S."/>
            <person name="Crasta O.R."/>
            <person name="Czar M.J."/>
            <person name="Dharmanolla C."/>
            <person name="Gillespie J.J."/>
            <person name="Kenyon R.W."/>
            <person name="Lu J."/>
            <person name="Mane S."/>
            <person name="Mohapatra S."/>
            <person name="Nagrani S."/>
            <person name="Purkayastha A."/>
            <person name="Rajasimha H.K."/>
            <person name="Shallom J.M."/>
            <person name="Shallom S."/>
            <person name="Shukla M."/>
            <person name="Snyder E.E."/>
            <person name="Sobral B.W."/>
            <person name="Wattam A.R."/>
            <person name="Will R."/>
            <person name="Williams K."/>
            <person name="Yoo H."/>
            <person name="Bruce D."/>
            <person name="Detter C."/>
            <person name="Munk C."/>
            <person name="Brettin T.S."/>
        </authorList>
    </citation>
    <scope>NUCLEOTIDE SEQUENCE [LARGE SCALE GENOMIC DNA]</scope>
    <source>
        <strain>ATCC 23445 / NCTC 10510</strain>
    </source>
</reference>
<comment type="function">
    <text evidence="1">Photosensitive kinase that is involved in increased bacterial virulence upon exposure to light. Once ejected from an infected animal host, sunlight acts as an environmental signal that increases the virulence of the bacterium, preparing it for infection of the next host. This photoreceptor protein is directly related to the bacterium's survival and replication within host macrophages (By similarity).</text>
</comment>
<comment type="catalytic activity">
    <reaction>
        <text>ATP + protein L-histidine = ADP + protein N-phospho-L-histidine.</text>
        <dbReference type="EC" id="2.7.13.3"/>
    </reaction>
</comment>
<comment type="PTM">
    <text evidence="1">FMN binds covalently to cysteine after exposure to blue light and this bond is spontaneously broken in the dark.</text>
</comment>
<comment type="sequence caution" evidence="4">
    <conflict type="erroneous initiation">
        <sequence resource="EMBL-CDS" id="ABY39573"/>
    </conflict>
</comment>